<gene>
    <name evidence="2" type="primary">RPL36</name>
    <name type="ORF">CAALFM_C203960WA</name>
</gene>
<keyword id="KW-0002">3D-structure</keyword>
<keyword id="KW-0963">Cytoplasm</keyword>
<keyword id="KW-1185">Reference proteome</keyword>
<keyword id="KW-0687">Ribonucleoprotein</keyword>
<keyword id="KW-0689">Ribosomal protein</keyword>
<name>RL36_CANAL</name>
<dbReference type="EMBL" id="CP017624">
    <property type="protein sequence ID" value="AOW27423.1"/>
    <property type="molecule type" value="Genomic_DNA"/>
</dbReference>
<dbReference type="PDB" id="7PZY">
    <property type="method" value="EM"/>
    <property type="resolution" value="2.32 A"/>
    <property type="chains" value="AJ=1-99"/>
</dbReference>
<dbReference type="PDB" id="7Q08">
    <property type="method" value="EM"/>
    <property type="resolution" value="2.56 A"/>
    <property type="chains" value="AJ=1-99"/>
</dbReference>
<dbReference type="PDB" id="7Q0F">
    <property type="method" value="EM"/>
    <property type="resolution" value="2.64 A"/>
    <property type="chains" value="AJ=1-99"/>
</dbReference>
<dbReference type="PDB" id="7Q0P">
    <property type="method" value="EM"/>
    <property type="resolution" value="2.77 A"/>
    <property type="chains" value="AJ=1-99"/>
</dbReference>
<dbReference type="PDB" id="7Q0R">
    <property type="method" value="EM"/>
    <property type="resolution" value="2.67 A"/>
    <property type="chains" value="AJ=1-99"/>
</dbReference>
<dbReference type="PDBsum" id="7PZY"/>
<dbReference type="PDBsum" id="7Q08"/>
<dbReference type="PDBsum" id="7Q0F"/>
<dbReference type="PDBsum" id="7Q0P"/>
<dbReference type="PDBsum" id="7Q0R"/>
<dbReference type="EMDB" id="EMD-13737"/>
<dbReference type="EMDB" id="EMD-13741"/>
<dbReference type="EMDB" id="EMD-13744"/>
<dbReference type="EMDB" id="EMD-13749"/>
<dbReference type="EMDB" id="EMD-13750"/>
<dbReference type="SMR" id="A0A1D8PH21"/>
<dbReference type="FunCoup" id="A0A1D8PH21">
    <property type="interactions" value="945"/>
</dbReference>
<dbReference type="STRING" id="237561.A0A1D8PH21"/>
<dbReference type="EnsemblFungi" id="C2_03960W_A-T">
    <property type="protein sequence ID" value="C2_03960W_A-T-p1"/>
    <property type="gene ID" value="C2_03960W_A"/>
</dbReference>
<dbReference type="KEGG" id="cal:CAALFM_C203960WA"/>
<dbReference type="CGD" id="CAL0000177209">
    <property type="gene designation" value="RPL39"/>
</dbReference>
<dbReference type="VEuPathDB" id="FungiDB:C2_03960W_A"/>
<dbReference type="eggNOG" id="KOG3452">
    <property type="taxonomic scope" value="Eukaryota"/>
</dbReference>
<dbReference type="InParanoid" id="A0A1D8PH21"/>
<dbReference type="OMA" id="NKGHKTE"/>
<dbReference type="OrthoDB" id="9616667at2759"/>
<dbReference type="Proteomes" id="UP000000559">
    <property type="component" value="Chromosome 2"/>
</dbReference>
<dbReference type="GO" id="GO:0022625">
    <property type="term" value="C:cytosolic large ribosomal subunit"/>
    <property type="evidence" value="ECO:0000318"/>
    <property type="project" value="GO_Central"/>
</dbReference>
<dbReference type="GO" id="GO:0003735">
    <property type="term" value="F:structural constituent of ribosome"/>
    <property type="evidence" value="ECO:0000318"/>
    <property type="project" value="GO_Central"/>
</dbReference>
<dbReference type="GO" id="GO:0002181">
    <property type="term" value="P:cytoplasmic translation"/>
    <property type="evidence" value="ECO:0000318"/>
    <property type="project" value="GO_Central"/>
</dbReference>
<dbReference type="FunFam" id="1.10.10.1760:FF:000003">
    <property type="entry name" value="60S ribosomal protein L36"/>
    <property type="match status" value="1"/>
</dbReference>
<dbReference type="Gene3D" id="1.10.10.1760">
    <property type="entry name" value="60S ribosomal protein L36"/>
    <property type="match status" value="1"/>
</dbReference>
<dbReference type="InterPro" id="IPR000509">
    <property type="entry name" value="Ribosomal_eL36"/>
</dbReference>
<dbReference type="InterPro" id="IPR038097">
    <property type="entry name" value="Ribosomal_eL36_sf"/>
</dbReference>
<dbReference type="PANTHER" id="PTHR10114">
    <property type="entry name" value="60S RIBOSOMAL PROTEIN L36"/>
    <property type="match status" value="1"/>
</dbReference>
<dbReference type="Pfam" id="PF01158">
    <property type="entry name" value="Ribosomal_L36e"/>
    <property type="match status" value="1"/>
</dbReference>
<dbReference type="PROSITE" id="PS01190">
    <property type="entry name" value="RIBOSOMAL_L36E"/>
    <property type="match status" value="1"/>
</dbReference>
<evidence type="ECO:0000269" key="1">
    <source>
    </source>
</evidence>
<evidence type="ECO:0000303" key="2">
    <source>
    </source>
</evidence>
<evidence type="ECO:0000305" key="3"/>
<evidence type="ECO:0000305" key="4">
    <source>
    </source>
</evidence>
<evidence type="ECO:0007744" key="5">
    <source>
        <dbReference type="PDB" id="7PZY"/>
    </source>
</evidence>
<evidence type="ECO:0007744" key="6">
    <source>
        <dbReference type="PDB" id="7Q0F"/>
    </source>
</evidence>
<evidence type="ECO:0007744" key="7">
    <source>
        <dbReference type="PDB" id="7Q0P"/>
    </source>
</evidence>
<sequence length="99" mass="11067">MAKSGIAAGVNKGRKTTAKEVAPKISYRKGASSQRTVFVRSIVKEVAGLAPYERRLIELIRNAGEKRAKKLAKKRLGTHKRALRKVEEMTQVIAESRRH</sequence>
<reference key="1">
    <citation type="journal article" date="2004" name="Proc. Natl. Acad. Sci. U.S.A.">
        <title>The diploid genome sequence of Candida albicans.</title>
        <authorList>
            <person name="Jones T."/>
            <person name="Federspiel N.A."/>
            <person name="Chibana H."/>
            <person name="Dungan J."/>
            <person name="Kalman S."/>
            <person name="Magee B.B."/>
            <person name="Newport G."/>
            <person name="Thorstenson Y.R."/>
            <person name="Agabian N."/>
            <person name="Magee P.T."/>
            <person name="Davis R.W."/>
            <person name="Scherer S."/>
        </authorList>
    </citation>
    <scope>NUCLEOTIDE SEQUENCE [LARGE SCALE GENOMIC DNA]</scope>
    <source>
        <strain>SC5314 / ATCC MYA-2876</strain>
    </source>
</reference>
<reference key="2">
    <citation type="journal article" date="2007" name="Genome Biol.">
        <title>Assembly of the Candida albicans genome into sixteen supercontigs aligned on the eight chromosomes.</title>
        <authorList>
            <person name="van het Hoog M."/>
            <person name="Rast T.J."/>
            <person name="Martchenko M."/>
            <person name="Grindle S."/>
            <person name="Dignard D."/>
            <person name="Hogues H."/>
            <person name="Cuomo C."/>
            <person name="Berriman M."/>
            <person name="Scherer S."/>
            <person name="Magee B.B."/>
            <person name="Whiteway M."/>
            <person name="Chibana H."/>
            <person name="Nantel A."/>
            <person name="Magee P.T."/>
        </authorList>
    </citation>
    <scope>GENOME REANNOTATION</scope>
    <source>
        <strain>SC5314 / ATCC MYA-2876</strain>
    </source>
</reference>
<reference key="3">
    <citation type="journal article" date="2013" name="Genome Biol.">
        <title>Assembly of a phased diploid Candida albicans genome facilitates allele-specific measurements and provides a simple model for repeat and indel structure.</title>
        <authorList>
            <person name="Muzzey D."/>
            <person name="Schwartz K."/>
            <person name="Weissman J.S."/>
            <person name="Sherlock G."/>
        </authorList>
    </citation>
    <scope>NUCLEOTIDE SEQUENCE [LARGE SCALE GENOMIC DNA]</scope>
    <scope>GENOME REANNOTATION</scope>
    <source>
        <strain>SC5314 / ATCC MYA-2876</strain>
    </source>
</reference>
<reference evidence="5 6 7" key="4">
    <citation type="journal article" date="2022" name="Sci. Adv.">
        <title>E-site drug specificity of the human pathogen Candida albicans ribosome.</title>
        <authorList>
            <person name="Zgadzay Y."/>
            <person name="Kolosova O."/>
            <person name="Stetsenko A."/>
            <person name="Wu C."/>
            <person name="Bruchlen D."/>
            <person name="Usachev K."/>
            <person name="Validov S."/>
            <person name="Jenner L."/>
            <person name="Rogachev A."/>
            <person name="Yusupova G."/>
            <person name="Sachs M.S."/>
            <person name="Guskov A."/>
            <person name="Yusupov M."/>
        </authorList>
    </citation>
    <scope>STRUCTURE BY ELECTRON MICROSCOPY (2.32 ANGSTROMS) OF THE 80S RIBOSOME</scope>
    <scope>SUBUNIT</scope>
</reference>
<organism>
    <name type="scientific">Candida albicans (strain SC5314 / ATCC MYA-2876)</name>
    <name type="common">Yeast</name>
    <dbReference type="NCBI Taxonomy" id="237561"/>
    <lineage>
        <taxon>Eukaryota</taxon>
        <taxon>Fungi</taxon>
        <taxon>Dikarya</taxon>
        <taxon>Ascomycota</taxon>
        <taxon>Saccharomycotina</taxon>
        <taxon>Pichiomycetes</taxon>
        <taxon>Debaryomycetaceae</taxon>
        <taxon>Candida/Lodderomyces clade</taxon>
        <taxon>Candida</taxon>
    </lineage>
</organism>
<comment type="function">
    <text evidence="4">Component of the ribosome, a large ribonucleoprotein complex responsible for the synthesis of proteins in the cell. The small ribosomal subunit (SSU) binds messenger RNAs (mRNAs) and translates the encoded message by selecting cognate aminoacyl-transfer RNA (tRNA) molecules. The large subunit (LSU) contains the ribosomal catalytic site termed the peptidyl transferase center (PTC), which catalyzes the formation of peptide bonds, thereby polymerizing the amino acids delivered by tRNAs into a polypeptide chain. The nascent polypeptides leave the ribosome through a tunnel in the LSU and interact with protein factors that function in enzymatic processing, targeting, and the membrane insertion of nascent chains at the exit of the ribosomal tunnel.</text>
</comment>
<comment type="subunit">
    <text evidence="1">Component of the large ribosomal subunit (PubMed:35613268). Mature ribosomes consist of a small (40S) and a large (60S) subunit (PubMed:35613268). The 40S subunit contains about 32 different proteins and 1 molecule of RNA (18S) (PubMed:35613268). The 60S subunit contains 45 different proteins and 3 molecules of RNA (25S, 5.8S and 5S) (PubMed:35613268).</text>
</comment>
<comment type="subcellular location">
    <subcellularLocation>
        <location evidence="4">Cytoplasm</location>
    </subcellularLocation>
</comment>
<comment type="similarity">
    <text evidence="3">Belongs to the eukaryotic ribosomal protein eL36 family.</text>
</comment>
<proteinExistence type="evidence at protein level"/>
<feature type="chain" id="PRO_0000456504" description="Large ribosomal subunit protein eL36">
    <location>
        <begin position="1"/>
        <end position="99"/>
    </location>
</feature>
<accession>A0A1D8PH21</accession>
<protein>
    <recommendedName>
        <fullName evidence="2">Large ribosomal subunit protein eL36</fullName>
    </recommendedName>
    <alternativeName>
        <fullName>60S ribosomal protein L36</fullName>
    </alternativeName>
</protein>